<gene>
    <name type="primary">CMC2</name>
    <name type="synonym">C16orf61</name>
    <name type="ORF">DC13</name>
</gene>
<evidence type="ECO:0000250" key="1"/>
<evidence type="ECO:0000255" key="2">
    <source>
        <dbReference type="PROSITE-ProRule" id="PRU01150"/>
    </source>
</evidence>
<evidence type="ECO:0000269" key="3">
    <source>
    </source>
</evidence>
<evidence type="ECO:0000305" key="4"/>
<feature type="chain" id="PRO_0000192943" description="COX assembly mitochondrial protein 2 homolog">
    <location>
        <begin position="1"/>
        <end position="79"/>
    </location>
</feature>
<feature type="domain" description="CHCH" evidence="2">
    <location>
        <begin position="11"/>
        <end position="55"/>
    </location>
</feature>
<feature type="short sequence motif" description="Cx9C motif 1" evidence="2">
    <location>
        <begin position="14"/>
        <end position="24"/>
    </location>
</feature>
<feature type="short sequence motif" description="Cx9C motif 2" evidence="2">
    <location>
        <begin position="37"/>
        <end position="47"/>
    </location>
</feature>
<feature type="disulfide bond" evidence="2">
    <location>
        <begin position="14"/>
        <end position="47"/>
    </location>
</feature>
<feature type="disulfide bond" evidence="2">
    <location>
        <begin position="24"/>
        <end position="37"/>
    </location>
</feature>
<feature type="sequence variant" id="VAR_033816" description="In dbSNP:rs2303217.">
    <original>T</original>
    <variation>S</variation>
    <location>
        <position position="11"/>
    </location>
</feature>
<organism>
    <name type="scientific">Homo sapiens</name>
    <name type="common">Human</name>
    <dbReference type="NCBI Taxonomy" id="9606"/>
    <lineage>
        <taxon>Eukaryota</taxon>
        <taxon>Metazoa</taxon>
        <taxon>Chordata</taxon>
        <taxon>Craniata</taxon>
        <taxon>Vertebrata</taxon>
        <taxon>Euteleostomi</taxon>
        <taxon>Mammalia</taxon>
        <taxon>Eutheria</taxon>
        <taxon>Euarchontoglires</taxon>
        <taxon>Primates</taxon>
        <taxon>Haplorrhini</taxon>
        <taxon>Catarrhini</taxon>
        <taxon>Hominidae</taxon>
        <taxon>Homo</taxon>
    </lineage>
</organism>
<sequence length="79" mass="9460">MHPDLSPHLHTEECNVLINLLKECHKNHNILKFFGYCNDVDRELRKCLKNEYVENRTKSREHGIAMRKKLFNPPEESEK</sequence>
<dbReference type="EMBL" id="AF201935">
    <property type="protein sequence ID" value="AAF86871.1"/>
    <property type="molecule type" value="mRNA"/>
</dbReference>
<dbReference type="EMBL" id="AC009079">
    <property type="status" value="NOT_ANNOTATED_CDS"/>
    <property type="molecule type" value="Genomic_DNA"/>
</dbReference>
<dbReference type="EMBL" id="AC092718">
    <property type="status" value="NOT_ANNOTATED_CDS"/>
    <property type="molecule type" value="Genomic_DNA"/>
</dbReference>
<dbReference type="EMBL" id="CH471114">
    <property type="protein sequence ID" value="EAW95557.1"/>
    <property type="molecule type" value="Genomic_DNA"/>
</dbReference>
<dbReference type="EMBL" id="CH471114">
    <property type="protein sequence ID" value="EAW95559.1"/>
    <property type="molecule type" value="Genomic_DNA"/>
</dbReference>
<dbReference type="EMBL" id="CH471114">
    <property type="protein sequence ID" value="EAW95560.1"/>
    <property type="molecule type" value="Genomic_DNA"/>
</dbReference>
<dbReference type="EMBL" id="BC032631">
    <property type="protein sequence ID" value="AAH32631.1"/>
    <property type="molecule type" value="mRNA"/>
</dbReference>
<dbReference type="CCDS" id="CCDS10930.1"/>
<dbReference type="RefSeq" id="NP_001338896.1">
    <property type="nucleotide sequence ID" value="NM_001351967.2"/>
</dbReference>
<dbReference type="RefSeq" id="NP_001338897.1">
    <property type="nucleotide sequence ID" value="NM_001351968.2"/>
</dbReference>
<dbReference type="RefSeq" id="NP_001338899.1">
    <property type="nucleotide sequence ID" value="NM_001351970.2"/>
</dbReference>
<dbReference type="RefSeq" id="NP_001338902.2">
    <property type="nucleotide sequence ID" value="NM_001351973.4"/>
</dbReference>
<dbReference type="RefSeq" id="NP_064573.1">
    <property type="nucleotide sequence ID" value="NM_020188.5"/>
</dbReference>
<dbReference type="RefSeq" id="XP_016878956.1">
    <property type="nucleotide sequence ID" value="XM_017023467.1"/>
</dbReference>
<dbReference type="RefSeq" id="XP_016878957.1">
    <property type="nucleotide sequence ID" value="XM_017023468.1"/>
</dbReference>
<dbReference type="RefSeq" id="XP_016878958.1">
    <property type="nucleotide sequence ID" value="XM_017023469.1"/>
</dbReference>
<dbReference type="RefSeq" id="XP_016878959.1">
    <property type="nucleotide sequence ID" value="XM_017023470.1"/>
</dbReference>
<dbReference type="SMR" id="Q9NRP2"/>
<dbReference type="BioGRID" id="121266">
    <property type="interactions" value="25"/>
</dbReference>
<dbReference type="FunCoup" id="Q9NRP2">
    <property type="interactions" value="560"/>
</dbReference>
<dbReference type="IntAct" id="Q9NRP2">
    <property type="interactions" value="11"/>
</dbReference>
<dbReference type="STRING" id="9606.ENSP00000219400"/>
<dbReference type="GlyGen" id="Q9NRP2">
    <property type="glycosylation" value="1 site, 1 O-linked glycan (1 site)"/>
</dbReference>
<dbReference type="iPTMnet" id="Q9NRP2"/>
<dbReference type="PhosphoSitePlus" id="Q9NRP2"/>
<dbReference type="BioMuta" id="CMC2"/>
<dbReference type="DMDM" id="37999796"/>
<dbReference type="jPOST" id="Q9NRP2"/>
<dbReference type="MassIVE" id="Q9NRP2"/>
<dbReference type="PaxDb" id="9606-ENSP00000219400"/>
<dbReference type="PeptideAtlas" id="Q9NRP2"/>
<dbReference type="ProteomicsDB" id="82399"/>
<dbReference type="Pumba" id="Q9NRP2"/>
<dbReference type="TopDownProteomics" id="Q9NRP2"/>
<dbReference type="Antibodypedia" id="1564">
    <property type="antibodies" value="70 antibodies from 17 providers"/>
</dbReference>
<dbReference type="DNASU" id="56942"/>
<dbReference type="Ensembl" id="ENST00000219400.8">
    <property type="protein sequence ID" value="ENSP00000219400.3"/>
    <property type="gene ID" value="ENSG00000103121.9"/>
</dbReference>
<dbReference type="Ensembl" id="ENST00000564249.5">
    <property type="protein sequence ID" value="ENSP00000456841.1"/>
    <property type="gene ID" value="ENSG00000103121.9"/>
</dbReference>
<dbReference type="Ensembl" id="ENST00000565650.5">
    <property type="protein sequence ID" value="ENSP00000455457.2"/>
    <property type="gene ID" value="ENSG00000103121.9"/>
</dbReference>
<dbReference type="Ensembl" id="ENST00000565914.5">
    <property type="protein sequence ID" value="ENSP00000455723.1"/>
    <property type="gene ID" value="ENSG00000103121.9"/>
</dbReference>
<dbReference type="Ensembl" id="ENST00000709304.1">
    <property type="protein sequence ID" value="ENSP00000517609.1"/>
    <property type="gene ID" value="ENSG00000291948.1"/>
</dbReference>
<dbReference type="Ensembl" id="ENST00000709314.1">
    <property type="protein sequence ID" value="ENSP00000517614.1"/>
    <property type="gene ID" value="ENSG00000291948.1"/>
</dbReference>
<dbReference type="Ensembl" id="ENST00000709315.1">
    <property type="protein sequence ID" value="ENSP00000517615.1"/>
    <property type="gene ID" value="ENSG00000291948.1"/>
</dbReference>
<dbReference type="Ensembl" id="ENST00000709318.1">
    <property type="protein sequence ID" value="ENSP00000517618.1"/>
    <property type="gene ID" value="ENSG00000291948.1"/>
</dbReference>
<dbReference type="GeneID" id="56942"/>
<dbReference type="KEGG" id="hsa:56942"/>
<dbReference type="MANE-Select" id="ENST00000219400.8">
    <property type="protein sequence ID" value="ENSP00000219400.3"/>
    <property type="RefSeq nucleotide sequence ID" value="NM_020188.5"/>
    <property type="RefSeq protein sequence ID" value="NP_064573.1"/>
</dbReference>
<dbReference type="UCSC" id="uc002ffu.4">
    <property type="organism name" value="human"/>
</dbReference>
<dbReference type="AGR" id="HGNC:24447"/>
<dbReference type="CTD" id="56942"/>
<dbReference type="DisGeNET" id="56942"/>
<dbReference type="GeneCards" id="CMC2"/>
<dbReference type="HGNC" id="HGNC:24447">
    <property type="gene designation" value="CMC2"/>
</dbReference>
<dbReference type="HPA" id="ENSG00000103121">
    <property type="expression patterns" value="Low tissue specificity"/>
</dbReference>
<dbReference type="neXtProt" id="NX_Q9NRP2"/>
<dbReference type="OpenTargets" id="ENSG00000103121"/>
<dbReference type="PharmGKB" id="PA143485398"/>
<dbReference type="VEuPathDB" id="HostDB:ENSG00000103121"/>
<dbReference type="eggNOG" id="KOG4148">
    <property type="taxonomic scope" value="Eukaryota"/>
</dbReference>
<dbReference type="GeneTree" id="ENSGT00390000016908"/>
<dbReference type="HOGENOM" id="CLU_169286_2_0_1"/>
<dbReference type="InParanoid" id="Q9NRP2"/>
<dbReference type="OMA" id="CLRNEYI"/>
<dbReference type="OrthoDB" id="532630at2759"/>
<dbReference type="PAN-GO" id="Q9NRP2">
    <property type="GO annotations" value="1 GO annotation based on evolutionary models"/>
</dbReference>
<dbReference type="PhylomeDB" id="Q9NRP2"/>
<dbReference type="TreeFam" id="TF314049"/>
<dbReference type="PathwayCommons" id="Q9NRP2"/>
<dbReference type="Reactome" id="R-HSA-1268020">
    <property type="pathway name" value="Mitochondrial protein import"/>
</dbReference>
<dbReference type="SignaLink" id="Q9NRP2"/>
<dbReference type="BioGRID-ORCS" id="56942">
    <property type="hits" value="45 hits in 1070 CRISPR screens"/>
</dbReference>
<dbReference type="ChiTaRS" id="CMC2">
    <property type="organism name" value="human"/>
</dbReference>
<dbReference type="GenomeRNAi" id="56942"/>
<dbReference type="Pharos" id="Q9NRP2">
    <property type="development level" value="Tbio"/>
</dbReference>
<dbReference type="PRO" id="PR:Q9NRP2"/>
<dbReference type="Proteomes" id="UP000005640">
    <property type="component" value="Chromosome 16"/>
</dbReference>
<dbReference type="RNAct" id="Q9NRP2">
    <property type="molecule type" value="protein"/>
</dbReference>
<dbReference type="Bgee" id="ENSG00000103121">
    <property type="expression patterns" value="Expressed in sperm and 203 other cell types or tissues"/>
</dbReference>
<dbReference type="ExpressionAtlas" id="Q9NRP2">
    <property type="expression patterns" value="baseline and differential"/>
</dbReference>
<dbReference type="GO" id="GO:0005829">
    <property type="term" value="C:cytosol"/>
    <property type="evidence" value="ECO:0000314"/>
    <property type="project" value="HPA"/>
</dbReference>
<dbReference type="GO" id="GO:0005739">
    <property type="term" value="C:mitochondrion"/>
    <property type="evidence" value="ECO:0000314"/>
    <property type="project" value="UniProtKB"/>
</dbReference>
<dbReference type="InterPro" id="IPR013892">
    <property type="entry name" value="Cyt_c_biogenesis_Cmc1-like"/>
</dbReference>
<dbReference type="PANTHER" id="PTHR22977">
    <property type="entry name" value="COX ASSEMBLY MITOCHONDRIAL PROTEIN"/>
    <property type="match status" value="1"/>
</dbReference>
<dbReference type="PANTHER" id="PTHR22977:SF1">
    <property type="entry name" value="COX ASSEMBLY MITOCHONDRIAL PROTEIN 2 HOMOLOG"/>
    <property type="match status" value="1"/>
</dbReference>
<dbReference type="Pfam" id="PF08583">
    <property type="entry name" value="Cmc1"/>
    <property type="match status" value="1"/>
</dbReference>
<dbReference type="PROSITE" id="PS51808">
    <property type="entry name" value="CHCH"/>
    <property type="match status" value="1"/>
</dbReference>
<keyword id="KW-1015">Disulfide bond</keyword>
<keyword id="KW-0496">Mitochondrion</keyword>
<keyword id="KW-1267">Proteomics identification</keyword>
<keyword id="KW-1185">Reference proteome</keyword>
<accession>Q9NRP2</accession>
<accession>D3DUK6</accession>
<proteinExistence type="evidence at protein level"/>
<name>COXM2_HUMAN</name>
<protein>
    <recommendedName>
        <fullName>COX assembly mitochondrial protein 2 homolog</fullName>
    </recommendedName>
</protein>
<comment type="function">
    <text evidence="1">May be involved in cytochrome c oxidase biogenesis.</text>
</comment>
<comment type="interaction">
    <interactant intactId="EBI-16780661">
        <id>Q9NRP2</id>
    </interactant>
    <interactant intactId="EBI-747505">
        <id>Q8TAB5</id>
        <label>C1orf216</label>
    </interactant>
    <organismsDiffer>false</organismsDiffer>
    <experiments>3</experiments>
</comment>
<comment type="interaction">
    <interactant intactId="EBI-16780661">
        <id>Q9NRP2</id>
    </interactant>
    <interactant intactId="EBI-11962928">
        <id>Q9UI47-2</id>
        <label>CTNNA3</label>
    </interactant>
    <organismsDiffer>false</organismsDiffer>
    <experiments>3</experiments>
</comment>
<comment type="subcellular location">
    <subcellularLocation>
        <location evidence="3">Mitochondrion</location>
    </subcellularLocation>
</comment>
<comment type="similarity">
    <text evidence="4">Belongs to the CMC family.</text>
</comment>
<reference key="1">
    <citation type="submission" date="1999-11" db="EMBL/GenBank/DDBJ databases">
        <title>Novel genes expressed in human dendritic cells.</title>
        <authorList>
            <person name="Gu Y."/>
            <person name="Peng Y."/>
            <person name="Li N."/>
            <person name="Gu W."/>
            <person name="Han Z."/>
            <person name="Fu G."/>
            <person name="Chen Z."/>
        </authorList>
    </citation>
    <scope>NUCLEOTIDE SEQUENCE [LARGE SCALE MRNA]</scope>
    <source>
        <tissue>Dendritic cell</tissue>
    </source>
</reference>
<reference key="2">
    <citation type="journal article" date="2004" name="Nature">
        <title>The sequence and analysis of duplication-rich human chromosome 16.</title>
        <authorList>
            <person name="Martin J."/>
            <person name="Han C."/>
            <person name="Gordon L.A."/>
            <person name="Terry A."/>
            <person name="Prabhakar S."/>
            <person name="She X."/>
            <person name="Xie G."/>
            <person name="Hellsten U."/>
            <person name="Chan Y.M."/>
            <person name="Altherr M."/>
            <person name="Couronne O."/>
            <person name="Aerts A."/>
            <person name="Bajorek E."/>
            <person name="Black S."/>
            <person name="Blumer H."/>
            <person name="Branscomb E."/>
            <person name="Brown N.C."/>
            <person name="Bruno W.J."/>
            <person name="Buckingham J.M."/>
            <person name="Callen D.F."/>
            <person name="Campbell C.S."/>
            <person name="Campbell M.L."/>
            <person name="Campbell E.W."/>
            <person name="Caoile C."/>
            <person name="Challacombe J.F."/>
            <person name="Chasteen L.A."/>
            <person name="Chertkov O."/>
            <person name="Chi H.C."/>
            <person name="Christensen M."/>
            <person name="Clark L.M."/>
            <person name="Cohn J.D."/>
            <person name="Denys M."/>
            <person name="Detter J.C."/>
            <person name="Dickson M."/>
            <person name="Dimitrijevic-Bussod M."/>
            <person name="Escobar J."/>
            <person name="Fawcett J.J."/>
            <person name="Flowers D."/>
            <person name="Fotopulos D."/>
            <person name="Glavina T."/>
            <person name="Gomez M."/>
            <person name="Gonzales E."/>
            <person name="Goodstein D."/>
            <person name="Goodwin L.A."/>
            <person name="Grady D.L."/>
            <person name="Grigoriev I."/>
            <person name="Groza M."/>
            <person name="Hammon N."/>
            <person name="Hawkins T."/>
            <person name="Haydu L."/>
            <person name="Hildebrand C.E."/>
            <person name="Huang W."/>
            <person name="Israni S."/>
            <person name="Jett J."/>
            <person name="Jewett P.B."/>
            <person name="Kadner K."/>
            <person name="Kimball H."/>
            <person name="Kobayashi A."/>
            <person name="Krawczyk M.-C."/>
            <person name="Leyba T."/>
            <person name="Longmire J.L."/>
            <person name="Lopez F."/>
            <person name="Lou Y."/>
            <person name="Lowry S."/>
            <person name="Ludeman T."/>
            <person name="Manohar C.F."/>
            <person name="Mark G.A."/>
            <person name="McMurray K.L."/>
            <person name="Meincke L.J."/>
            <person name="Morgan J."/>
            <person name="Moyzis R.K."/>
            <person name="Mundt M.O."/>
            <person name="Munk A.C."/>
            <person name="Nandkeshwar R.D."/>
            <person name="Pitluck S."/>
            <person name="Pollard M."/>
            <person name="Predki P."/>
            <person name="Parson-Quintana B."/>
            <person name="Ramirez L."/>
            <person name="Rash S."/>
            <person name="Retterer J."/>
            <person name="Ricke D.O."/>
            <person name="Robinson D.L."/>
            <person name="Rodriguez A."/>
            <person name="Salamov A."/>
            <person name="Saunders E.H."/>
            <person name="Scott D."/>
            <person name="Shough T."/>
            <person name="Stallings R.L."/>
            <person name="Stalvey M."/>
            <person name="Sutherland R.D."/>
            <person name="Tapia R."/>
            <person name="Tesmer J.G."/>
            <person name="Thayer N."/>
            <person name="Thompson L.S."/>
            <person name="Tice H."/>
            <person name="Torney D.C."/>
            <person name="Tran-Gyamfi M."/>
            <person name="Tsai M."/>
            <person name="Ulanovsky L.E."/>
            <person name="Ustaszewska A."/>
            <person name="Vo N."/>
            <person name="White P.S."/>
            <person name="Williams A.L."/>
            <person name="Wills P.L."/>
            <person name="Wu J.-R."/>
            <person name="Wu K."/>
            <person name="Yang J."/>
            <person name="DeJong P."/>
            <person name="Bruce D."/>
            <person name="Doggett N.A."/>
            <person name="Deaven L."/>
            <person name="Schmutz J."/>
            <person name="Grimwood J."/>
            <person name="Richardson P."/>
            <person name="Rokhsar D.S."/>
            <person name="Eichler E.E."/>
            <person name="Gilna P."/>
            <person name="Lucas S.M."/>
            <person name="Myers R.M."/>
            <person name="Rubin E.M."/>
            <person name="Pennacchio L.A."/>
        </authorList>
    </citation>
    <scope>NUCLEOTIDE SEQUENCE [LARGE SCALE GENOMIC DNA]</scope>
</reference>
<reference key="3">
    <citation type="submission" date="2005-09" db="EMBL/GenBank/DDBJ databases">
        <authorList>
            <person name="Mural R.J."/>
            <person name="Istrail S."/>
            <person name="Sutton G.G."/>
            <person name="Florea L."/>
            <person name="Halpern A.L."/>
            <person name="Mobarry C.M."/>
            <person name="Lippert R."/>
            <person name="Walenz B."/>
            <person name="Shatkay H."/>
            <person name="Dew I."/>
            <person name="Miller J.R."/>
            <person name="Flanigan M.J."/>
            <person name="Edwards N.J."/>
            <person name="Bolanos R."/>
            <person name="Fasulo D."/>
            <person name="Halldorsson B.V."/>
            <person name="Hannenhalli S."/>
            <person name="Turner R."/>
            <person name="Yooseph S."/>
            <person name="Lu F."/>
            <person name="Nusskern D.R."/>
            <person name="Shue B.C."/>
            <person name="Zheng X.H."/>
            <person name="Zhong F."/>
            <person name="Delcher A.L."/>
            <person name="Huson D.H."/>
            <person name="Kravitz S.A."/>
            <person name="Mouchard L."/>
            <person name="Reinert K."/>
            <person name="Remington K.A."/>
            <person name="Clark A.G."/>
            <person name="Waterman M.S."/>
            <person name="Eichler E.E."/>
            <person name="Adams M.D."/>
            <person name="Hunkapiller M.W."/>
            <person name="Myers E.W."/>
            <person name="Venter J.C."/>
        </authorList>
    </citation>
    <scope>NUCLEOTIDE SEQUENCE [LARGE SCALE GENOMIC DNA]</scope>
</reference>
<reference key="4">
    <citation type="journal article" date="2004" name="Genome Res.">
        <title>The status, quality, and expansion of the NIH full-length cDNA project: the Mammalian Gene Collection (MGC).</title>
        <authorList>
            <consortium name="The MGC Project Team"/>
        </authorList>
    </citation>
    <scope>NUCLEOTIDE SEQUENCE [LARGE SCALE MRNA]</scope>
    <source>
        <tissue>Mammary gland</tissue>
    </source>
</reference>
<reference key="5">
    <citation type="journal article" date="2010" name="J. Biol. Chem.">
        <title>The conserved mitochondrial twin Cx9C protein Cmc2 Is a Cmc1 homologue essential for cytochrome c oxidase biogenesis.</title>
        <authorList>
            <person name="Horn D."/>
            <person name="Zhou W."/>
            <person name="Trevisson E."/>
            <person name="Al-Ali H."/>
            <person name="Harris T.K."/>
            <person name="Salviati L."/>
            <person name="Barrientos A."/>
        </authorList>
    </citation>
    <scope>SUBCELLULAR LOCATION</scope>
</reference>
<reference key="6">
    <citation type="journal article" date="2011" name="BMC Syst. Biol.">
        <title>Initial characterization of the human central proteome.</title>
        <authorList>
            <person name="Burkard T.R."/>
            <person name="Planyavsky M."/>
            <person name="Kaupe I."/>
            <person name="Breitwieser F.P."/>
            <person name="Buerckstuemmer T."/>
            <person name="Bennett K.L."/>
            <person name="Superti-Furga G."/>
            <person name="Colinge J."/>
        </authorList>
    </citation>
    <scope>IDENTIFICATION BY MASS SPECTROMETRY [LARGE SCALE ANALYSIS]</scope>
</reference>
<reference key="7">
    <citation type="journal article" date="2015" name="Proteomics">
        <title>N-terminome analysis of the human mitochondrial proteome.</title>
        <authorList>
            <person name="Vaca Jacome A.S."/>
            <person name="Rabilloud T."/>
            <person name="Schaeffer-Reiss C."/>
            <person name="Rompais M."/>
            <person name="Ayoub D."/>
            <person name="Lane L."/>
            <person name="Bairoch A."/>
            <person name="Van Dorsselaer A."/>
            <person name="Carapito C."/>
        </authorList>
    </citation>
    <scope>IDENTIFICATION BY MASS SPECTROMETRY [LARGE SCALE ANALYSIS]</scope>
</reference>